<proteinExistence type="inferred from homology"/>
<gene>
    <name evidence="1" type="primary">miaB</name>
    <name type="ordered locus">AZC_0008</name>
</gene>
<comment type="function">
    <text evidence="1">Catalyzes the methylthiolation of N6-(dimethylallyl)adenosine (i(6)A), leading to the formation of 2-methylthio-N6-(dimethylallyl)adenosine (ms(2)i(6)A) at position 37 in tRNAs that read codons beginning with uridine.</text>
</comment>
<comment type="catalytic activity">
    <reaction evidence="1">
        <text>N(6)-dimethylallyladenosine(37) in tRNA + (sulfur carrier)-SH + AH2 + 2 S-adenosyl-L-methionine = 2-methylsulfanyl-N(6)-dimethylallyladenosine(37) in tRNA + (sulfur carrier)-H + 5'-deoxyadenosine + L-methionine + A + S-adenosyl-L-homocysteine + 2 H(+)</text>
        <dbReference type="Rhea" id="RHEA:37067"/>
        <dbReference type="Rhea" id="RHEA-COMP:10375"/>
        <dbReference type="Rhea" id="RHEA-COMP:10376"/>
        <dbReference type="Rhea" id="RHEA-COMP:14737"/>
        <dbReference type="Rhea" id="RHEA-COMP:14739"/>
        <dbReference type="ChEBI" id="CHEBI:13193"/>
        <dbReference type="ChEBI" id="CHEBI:15378"/>
        <dbReference type="ChEBI" id="CHEBI:17319"/>
        <dbReference type="ChEBI" id="CHEBI:17499"/>
        <dbReference type="ChEBI" id="CHEBI:29917"/>
        <dbReference type="ChEBI" id="CHEBI:57844"/>
        <dbReference type="ChEBI" id="CHEBI:57856"/>
        <dbReference type="ChEBI" id="CHEBI:59789"/>
        <dbReference type="ChEBI" id="CHEBI:64428"/>
        <dbReference type="ChEBI" id="CHEBI:74415"/>
        <dbReference type="ChEBI" id="CHEBI:74417"/>
        <dbReference type="EC" id="2.8.4.3"/>
    </reaction>
</comment>
<comment type="cofactor">
    <cofactor evidence="1">
        <name>[4Fe-4S] cluster</name>
        <dbReference type="ChEBI" id="CHEBI:49883"/>
    </cofactor>
    <text evidence="1">Binds 2 [4Fe-4S] clusters. One cluster is coordinated with 3 cysteines and an exchangeable S-adenosyl-L-methionine.</text>
</comment>
<comment type="subunit">
    <text evidence="1">Monomer.</text>
</comment>
<comment type="subcellular location">
    <subcellularLocation>
        <location evidence="1">Cytoplasm</location>
    </subcellularLocation>
</comment>
<comment type="similarity">
    <text evidence="1">Belongs to the methylthiotransferase family. MiaB subfamily.</text>
</comment>
<reference key="1">
    <citation type="submission" date="2007-04" db="EMBL/GenBank/DDBJ databases">
        <title>Complete genome sequence of the nitrogen-fixing bacterium Azorhizobium caulinodans ORS571.</title>
        <authorList>
            <person name="Lee K.B."/>
            <person name="Backer P.D."/>
            <person name="Aono T."/>
            <person name="Liu C.T."/>
            <person name="Suzuki S."/>
            <person name="Suzuki T."/>
            <person name="Kaneko T."/>
            <person name="Yamada M."/>
            <person name="Tabata S."/>
            <person name="Kupfer D.M."/>
            <person name="Najar F.Z."/>
            <person name="Wiley G.B."/>
            <person name="Roe B."/>
            <person name="Binnewies T."/>
            <person name="Ussery D."/>
            <person name="Vereecke D."/>
            <person name="Gevers D."/>
            <person name="Holsters M."/>
            <person name="Oyaizu H."/>
        </authorList>
    </citation>
    <scope>NUCLEOTIDE SEQUENCE [LARGE SCALE GENOMIC DNA]</scope>
    <source>
        <strain>ATCC 43989 / DSM 5975 / JCM 20966 / LMG 6465 / NBRC 14845 / NCIMB 13405 / ORS 571</strain>
    </source>
</reference>
<organism>
    <name type="scientific">Azorhizobium caulinodans (strain ATCC 43989 / DSM 5975 / JCM 20966 / LMG 6465 / NBRC 14845 / NCIMB 13405 / ORS 571)</name>
    <dbReference type="NCBI Taxonomy" id="438753"/>
    <lineage>
        <taxon>Bacteria</taxon>
        <taxon>Pseudomonadati</taxon>
        <taxon>Pseudomonadota</taxon>
        <taxon>Alphaproteobacteria</taxon>
        <taxon>Hyphomicrobiales</taxon>
        <taxon>Xanthobacteraceae</taxon>
        <taxon>Azorhizobium</taxon>
    </lineage>
</organism>
<keyword id="KW-0004">4Fe-4S</keyword>
<keyword id="KW-0963">Cytoplasm</keyword>
<keyword id="KW-0408">Iron</keyword>
<keyword id="KW-0411">Iron-sulfur</keyword>
<keyword id="KW-0479">Metal-binding</keyword>
<keyword id="KW-1185">Reference proteome</keyword>
<keyword id="KW-0949">S-adenosyl-L-methionine</keyword>
<keyword id="KW-0808">Transferase</keyword>
<keyword id="KW-0819">tRNA processing</keyword>
<accession>A8IG00</accession>
<sequence>MQEPRKLYVKSFGCQMNVYDSQRMADALAKEGYVETQDPADADLVILNTCHIREKAAEKVYSELGRLRKAKQDAGSDTTIAVAGCVAQAEGAEIMKRAPVVDLVVGPQSYHRLPEMLARVRDGKRVVDTEFPAEDKFDHLPAPSAAATKKRGPTAFVTVQEGCDKFCTFCVVPYTRGAEVSRSVSKIVGEARALVDQGVREITLIGQNVNAFHGEGPDGRTWGLGRLLEELAGINGLARLRYTTSHPRDMDDGLIAAHRDLPQLMPYLHLPVQSGSDRILAAMNRKHGREIYFEIIDKLRAARPDIALSSDFIVGFPGETEADFEDTLDLARRVGFASAYSFKYSIRPGTPAAEHDHQLSEEVKSERLARLHQVLEASKTAFDRACMGRRFDILLEKPGRLPGQLIGRSPYLQSVVVTAPGAGIGDFVTVDITDVGPNSLAGQVVDAVEDRGRTSDRPLVAMEA</sequence>
<evidence type="ECO:0000255" key="1">
    <source>
        <dbReference type="HAMAP-Rule" id="MF_01864"/>
    </source>
</evidence>
<evidence type="ECO:0000255" key="2">
    <source>
        <dbReference type="PROSITE-ProRule" id="PRU01266"/>
    </source>
</evidence>
<name>MIAB_AZOC5</name>
<dbReference type="EC" id="2.8.4.3" evidence="1"/>
<dbReference type="EMBL" id="AP009384">
    <property type="protein sequence ID" value="BAF86006.1"/>
    <property type="molecule type" value="Genomic_DNA"/>
</dbReference>
<dbReference type="RefSeq" id="WP_012168539.1">
    <property type="nucleotide sequence ID" value="NC_009937.1"/>
</dbReference>
<dbReference type="SMR" id="A8IG00"/>
<dbReference type="STRING" id="438753.AZC_0008"/>
<dbReference type="KEGG" id="azc:AZC_0008"/>
<dbReference type="eggNOG" id="COG0621">
    <property type="taxonomic scope" value="Bacteria"/>
</dbReference>
<dbReference type="HOGENOM" id="CLU_018697_2_0_5"/>
<dbReference type="Proteomes" id="UP000000270">
    <property type="component" value="Chromosome"/>
</dbReference>
<dbReference type="GO" id="GO:0005829">
    <property type="term" value="C:cytosol"/>
    <property type="evidence" value="ECO:0007669"/>
    <property type="project" value="TreeGrafter"/>
</dbReference>
<dbReference type="GO" id="GO:0051539">
    <property type="term" value="F:4 iron, 4 sulfur cluster binding"/>
    <property type="evidence" value="ECO:0007669"/>
    <property type="project" value="UniProtKB-UniRule"/>
</dbReference>
<dbReference type="GO" id="GO:0046872">
    <property type="term" value="F:metal ion binding"/>
    <property type="evidence" value="ECO:0007669"/>
    <property type="project" value="UniProtKB-KW"/>
</dbReference>
<dbReference type="GO" id="GO:0035597">
    <property type="term" value="F:N6-isopentenyladenosine methylthiotransferase activity"/>
    <property type="evidence" value="ECO:0007669"/>
    <property type="project" value="TreeGrafter"/>
</dbReference>
<dbReference type="CDD" id="cd01335">
    <property type="entry name" value="Radical_SAM"/>
    <property type="match status" value="1"/>
</dbReference>
<dbReference type="FunFam" id="3.40.50.12160:FF:000001">
    <property type="entry name" value="tRNA-2-methylthio-N(6)-dimethylallyladenosine synthase"/>
    <property type="match status" value="1"/>
</dbReference>
<dbReference type="FunFam" id="3.80.30.20:FF:000001">
    <property type="entry name" value="tRNA-2-methylthio-N(6)-dimethylallyladenosine synthase 2"/>
    <property type="match status" value="1"/>
</dbReference>
<dbReference type="Gene3D" id="3.40.50.12160">
    <property type="entry name" value="Methylthiotransferase, N-terminal domain"/>
    <property type="match status" value="1"/>
</dbReference>
<dbReference type="Gene3D" id="3.80.30.20">
    <property type="entry name" value="tm_1862 like domain"/>
    <property type="match status" value="1"/>
</dbReference>
<dbReference type="HAMAP" id="MF_01864">
    <property type="entry name" value="tRNA_metthiotr_MiaB"/>
    <property type="match status" value="1"/>
</dbReference>
<dbReference type="InterPro" id="IPR006638">
    <property type="entry name" value="Elp3/MiaA/NifB-like_rSAM"/>
</dbReference>
<dbReference type="InterPro" id="IPR005839">
    <property type="entry name" value="Methylthiotransferase"/>
</dbReference>
<dbReference type="InterPro" id="IPR020612">
    <property type="entry name" value="Methylthiotransferase_CS"/>
</dbReference>
<dbReference type="InterPro" id="IPR013848">
    <property type="entry name" value="Methylthiotransferase_N"/>
</dbReference>
<dbReference type="InterPro" id="IPR038135">
    <property type="entry name" value="Methylthiotransferase_N_sf"/>
</dbReference>
<dbReference type="InterPro" id="IPR006463">
    <property type="entry name" value="MiaB_methiolase"/>
</dbReference>
<dbReference type="InterPro" id="IPR007197">
    <property type="entry name" value="rSAM"/>
</dbReference>
<dbReference type="InterPro" id="IPR023404">
    <property type="entry name" value="rSAM_horseshoe"/>
</dbReference>
<dbReference type="InterPro" id="IPR002792">
    <property type="entry name" value="TRAM_dom"/>
</dbReference>
<dbReference type="NCBIfam" id="TIGR01574">
    <property type="entry name" value="miaB-methiolase"/>
    <property type="match status" value="1"/>
</dbReference>
<dbReference type="NCBIfam" id="TIGR00089">
    <property type="entry name" value="MiaB/RimO family radical SAM methylthiotransferase"/>
    <property type="match status" value="1"/>
</dbReference>
<dbReference type="PANTHER" id="PTHR43020">
    <property type="entry name" value="CDK5 REGULATORY SUBUNIT-ASSOCIATED PROTEIN 1"/>
    <property type="match status" value="1"/>
</dbReference>
<dbReference type="PANTHER" id="PTHR43020:SF2">
    <property type="entry name" value="MITOCHONDRIAL TRNA METHYLTHIOTRANSFERASE CDK5RAP1"/>
    <property type="match status" value="1"/>
</dbReference>
<dbReference type="Pfam" id="PF04055">
    <property type="entry name" value="Radical_SAM"/>
    <property type="match status" value="1"/>
</dbReference>
<dbReference type="Pfam" id="PF01938">
    <property type="entry name" value="TRAM"/>
    <property type="match status" value="1"/>
</dbReference>
<dbReference type="Pfam" id="PF00919">
    <property type="entry name" value="UPF0004"/>
    <property type="match status" value="1"/>
</dbReference>
<dbReference type="SFLD" id="SFLDF00273">
    <property type="entry name" value="(dimethylallyl)adenosine_tRNA"/>
    <property type="match status" value="1"/>
</dbReference>
<dbReference type="SFLD" id="SFLDG01082">
    <property type="entry name" value="B12-binding_domain_containing"/>
    <property type="match status" value="1"/>
</dbReference>
<dbReference type="SFLD" id="SFLDG01061">
    <property type="entry name" value="methylthiotransferase"/>
    <property type="match status" value="1"/>
</dbReference>
<dbReference type="SMART" id="SM00729">
    <property type="entry name" value="Elp3"/>
    <property type="match status" value="1"/>
</dbReference>
<dbReference type="SUPFAM" id="SSF102114">
    <property type="entry name" value="Radical SAM enzymes"/>
    <property type="match status" value="1"/>
</dbReference>
<dbReference type="PROSITE" id="PS51449">
    <property type="entry name" value="MTTASE_N"/>
    <property type="match status" value="1"/>
</dbReference>
<dbReference type="PROSITE" id="PS01278">
    <property type="entry name" value="MTTASE_RADICAL"/>
    <property type="match status" value="1"/>
</dbReference>
<dbReference type="PROSITE" id="PS51918">
    <property type="entry name" value="RADICAL_SAM"/>
    <property type="match status" value="1"/>
</dbReference>
<dbReference type="PROSITE" id="PS50926">
    <property type="entry name" value="TRAM"/>
    <property type="match status" value="1"/>
</dbReference>
<feature type="chain" id="PRO_0000374122" description="tRNA-2-methylthio-N(6)-dimethylallyladenosine synthase">
    <location>
        <begin position="1"/>
        <end position="464"/>
    </location>
</feature>
<feature type="domain" description="MTTase N-terminal" evidence="1">
    <location>
        <begin position="5"/>
        <end position="122"/>
    </location>
</feature>
<feature type="domain" description="Radical SAM core" evidence="2">
    <location>
        <begin position="149"/>
        <end position="383"/>
    </location>
</feature>
<feature type="domain" description="TRAM" evidence="1">
    <location>
        <begin position="384"/>
        <end position="446"/>
    </location>
</feature>
<feature type="binding site" evidence="1">
    <location>
        <position position="14"/>
    </location>
    <ligand>
        <name>[4Fe-4S] cluster</name>
        <dbReference type="ChEBI" id="CHEBI:49883"/>
        <label>1</label>
    </ligand>
</feature>
<feature type="binding site" evidence="1">
    <location>
        <position position="50"/>
    </location>
    <ligand>
        <name>[4Fe-4S] cluster</name>
        <dbReference type="ChEBI" id="CHEBI:49883"/>
        <label>1</label>
    </ligand>
</feature>
<feature type="binding site" evidence="1">
    <location>
        <position position="85"/>
    </location>
    <ligand>
        <name>[4Fe-4S] cluster</name>
        <dbReference type="ChEBI" id="CHEBI:49883"/>
        <label>1</label>
    </ligand>
</feature>
<feature type="binding site" evidence="1">
    <location>
        <position position="163"/>
    </location>
    <ligand>
        <name>[4Fe-4S] cluster</name>
        <dbReference type="ChEBI" id="CHEBI:49883"/>
        <label>2</label>
        <note>4Fe-4S-S-AdoMet</note>
    </ligand>
</feature>
<feature type="binding site" evidence="1">
    <location>
        <position position="167"/>
    </location>
    <ligand>
        <name>[4Fe-4S] cluster</name>
        <dbReference type="ChEBI" id="CHEBI:49883"/>
        <label>2</label>
        <note>4Fe-4S-S-AdoMet</note>
    </ligand>
</feature>
<feature type="binding site" evidence="1">
    <location>
        <position position="170"/>
    </location>
    <ligand>
        <name>[4Fe-4S] cluster</name>
        <dbReference type="ChEBI" id="CHEBI:49883"/>
        <label>2</label>
        <note>4Fe-4S-S-AdoMet</note>
    </ligand>
</feature>
<protein>
    <recommendedName>
        <fullName evidence="1">tRNA-2-methylthio-N(6)-dimethylallyladenosine synthase</fullName>
        <ecNumber evidence="1">2.8.4.3</ecNumber>
    </recommendedName>
    <alternativeName>
        <fullName evidence="1">(Dimethylallyl)adenosine tRNA methylthiotransferase MiaB</fullName>
    </alternativeName>
    <alternativeName>
        <fullName evidence="1">tRNA-i(6)A37 methylthiotransferase</fullName>
    </alternativeName>
</protein>